<feature type="chain" id="PRO_0000223456" description="Urease accessory protein UreE">
    <location>
        <begin position="1"/>
        <end position="227"/>
    </location>
</feature>
<feature type="region of interest" description="Disordered" evidence="2">
    <location>
        <begin position="192"/>
        <end position="227"/>
    </location>
</feature>
<feature type="compositionally biased region" description="Basic and acidic residues" evidence="2">
    <location>
        <begin position="209"/>
        <end position="221"/>
    </location>
</feature>
<dbReference type="EMBL" id="AY363681">
    <property type="protein sequence ID" value="AAR15095.1"/>
    <property type="molecule type" value="Genomic_DNA"/>
</dbReference>
<dbReference type="RefSeq" id="WP_032898219.1">
    <property type="nucleotide sequence ID" value="NZ_PEHN01000005.1"/>
</dbReference>
<dbReference type="SMR" id="Q6UR75"/>
<dbReference type="GeneID" id="89597914"/>
<dbReference type="GO" id="GO:0005737">
    <property type="term" value="C:cytoplasm"/>
    <property type="evidence" value="ECO:0007669"/>
    <property type="project" value="UniProtKB-SubCell"/>
</dbReference>
<dbReference type="GO" id="GO:0016151">
    <property type="term" value="F:nickel cation binding"/>
    <property type="evidence" value="ECO:0007669"/>
    <property type="project" value="UniProtKB-UniRule"/>
</dbReference>
<dbReference type="GO" id="GO:0051082">
    <property type="term" value="F:unfolded protein binding"/>
    <property type="evidence" value="ECO:0007669"/>
    <property type="project" value="UniProtKB-UniRule"/>
</dbReference>
<dbReference type="GO" id="GO:0006457">
    <property type="term" value="P:protein folding"/>
    <property type="evidence" value="ECO:0007669"/>
    <property type="project" value="InterPro"/>
</dbReference>
<dbReference type="CDD" id="cd00571">
    <property type="entry name" value="UreE"/>
    <property type="match status" value="1"/>
</dbReference>
<dbReference type="Gene3D" id="2.60.260.20">
    <property type="entry name" value="Urease metallochaperone UreE, N-terminal domain"/>
    <property type="match status" value="1"/>
</dbReference>
<dbReference type="HAMAP" id="MF_00822">
    <property type="entry name" value="UreE"/>
    <property type="match status" value="1"/>
</dbReference>
<dbReference type="InterPro" id="IPR012406">
    <property type="entry name" value="UreE"/>
</dbReference>
<dbReference type="InterPro" id="IPR004029">
    <property type="entry name" value="UreE_N"/>
</dbReference>
<dbReference type="InterPro" id="IPR036118">
    <property type="entry name" value="UreE_N_sf"/>
</dbReference>
<dbReference type="NCBIfam" id="NF009761">
    <property type="entry name" value="PRK13262.1"/>
    <property type="match status" value="1"/>
</dbReference>
<dbReference type="Pfam" id="PF02814">
    <property type="entry name" value="UreE_N"/>
    <property type="match status" value="1"/>
</dbReference>
<dbReference type="PIRSF" id="PIRSF036402">
    <property type="entry name" value="Ureas_acces_UreE"/>
    <property type="match status" value="1"/>
</dbReference>
<dbReference type="SMART" id="SM00988">
    <property type="entry name" value="UreE_N"/>
    <property type="match status" value="1"/>
</dbReference>
<dbReference type="SUPFAM" id="SSF69287">
    <property type="entry name" value="Urease metallochaperone UreE, N-terminal domain"/>
    <property type="match status" value="1"/>
</dbReference>
<organism>
    <name type="scientific">Yersinia bercovieri</name>
    <dbReference type="NCBI Taxonomy" id="634"/>
    <lineage>
        <taxon>Bacteria</taxon>
        <taxon>Pseudomonadati</taxon>
        <taxon>Pseudomonadota</taxon>
        <taxon>Gammaproteobacteria</taxon>
        <taxon>Enterobacterales</taxon>
        <taxon>Yersiniaceae</taxon>
        <taxon>Yersinia</taxon>
    </lineage>
</organism>
<name>UREE_YERBE</name>
<sequence length="227" mass="25645">MILIEHILGNVKKDPVWRERLKGATFDFLVLDQREAQKSRCRKSSTQGLDLGISLDRNVVLADGDVLSWDEKTNVAVIVQINLRDVMVIDLRELKKRSADELIKTCFELGHALGNQHWKAVTKNNEVYVPLTVATTMMDSVMRTHGFQHLPFRFAKGAEILPLLSNSEARLLFGGAEESDTHVHVASPLDEPHGSGLHVHAIHSHGHSHSHDHDHDHNHDHDHKHKQ</sequence>
<gene>
    <name evidence="1" type="primary">ureE</name>
</gene>
<proteinExistence type="inferred from homology"/>
<comment type="function">
    <text evidence="1">Involved in urease metallocenter assembly. Binds nickel. Probably functions as a nickel donor during metallocenter assembly.</text>
</comment>
<comment type="subcellular location">
    <subcellularLocation>
        <location evidence="1">Cytoplasm</location>
    </subcellularLocation>
</comment>
<comment type="similarity">
    <text evidence="1">Belongs to the UreE family.</text>
</comment>
<keyword id="KW-0143">Chaperone</keyword>
<keyword id="KW-0963">Cytoplasm</keyword>
<keyword id="KW-0533">Nickel</keyword>
<keyword id="KW-0996">Nickel insertion</keyword>
<evidence type="ECO:0000255" key="1">
    <source>
        <dbReference type="HAMAP-Rule" id="MF_00822"/>
    </source>
</evidence>
<evidence type="ECO:0000256" key="2">
    <source>
        <dbReference type="SAM" id="MobiDB-lite"/>
    </source>
</evidence>
<protein>
    <recommendedName>
        <fullName evidence="1">Urease accessory protein UreE</fullName>
    </recommendedName>
</protein>
<reference key="1">
    <citation type="submission" date="2003-08" db="EMBL/GenBank/DDBJ databases">
        <title>Yersinia bercovieri urease gene locus (ureABCEFGD) and urea transporter gene (yut).</title>
        <authorList>
            <person name="Sebbane F."/>
            <person name="Lemaitre N."/>
            <person name="Simonet M."/>
        </authorList>
    </citation>
    <scope>NUCLEOTIDE SEQUENCE [GENOMIC DNA]</scope>
</reference>
<accession>Q6UR75</accession>